<reference key="1">
    <citation type="journal article" date="2013" name="Plant Physiol.">
        <title>A Nostoc punctiforme Sugar Transporter Necessary to Establish a Cyanobacterium-Plant Symbiosis.</title>
        <authorList>
            <person name="Ekman M."/>
            <person name="Picossi S."/>
            <person name="Campbell E.L."/>
            <person name="Meeks J.C."/>
            <person name="Flores E."/>
        </authorList>
    </citation>
    <scope>NUCLEOTIDE SEQUENCE [LARGE SCALE GENOMIC DNA]</scope>
    <source>
        <strain>ATCC 29133 / PCC 73102</strain>
    </source>
</reference>
<comment type="function">
    <text evidence="1">F(1)F(0) ATP synthase produces ATP from ADP in the presence of a proton or sodium gradient. F-type ATPases consist of two structural domains, F(1) containing the extramembraneous catalytic core and F(0) containing the membrane proton channel, linked together by a central stalk and a peripheral stalk. During catalysis, ATP synthesis in the catalytic domain of F(1) is coupled via a rotary mechanism of the central stalk subunits to proton translocation.</text>
</comment>
<comment type="function">
    <text evidence="1">This protein is part of the stalk that links CF(0) to CF(1). It either transmits conformational changes from CF(0) to CF(1) or is implicated in proton conduction.</text>
</comment>
<comment type="subunit">
    <text evidence="1">F-type ATPases have 2 components, F(1) - the catalytic core - and F(0) - the membrane proton channel. F(1) has five subunits: alpha(3), beta(3), gamma(1), delta(1), epsilon(1). CF(0) has four main subunits: a(1), b(1), b'(1) and c(10-14). The alpha and beta chains form an alternating ring which encloses part of the gamma chain. F(1) is attached to F(0) by a central stalk formed by the gamma and epsilon chains, while a peripheral stalk is formed by the delta, b and b' chains.</text>
</comment>
<comment type="subcellular location">
    <subcellularLocation>
        <location evidence="1">Cellular thylakoid membrane</location>
        <topology evidence="1">Peripheral membrane protein</topology>
    </subcellularLocation>
</comment>
<comment type="similarity">
    <text evidence="1">Belongs to the ATPase delta chain family.</text>
</comment>
<name>ATPD_NOSP7</name>
<protein>
    <recommendedName>
        <fullName evidence="1">ATP synthase subunit delta</fullName>
    </recommendedName>
    <alternativeName>
        <fullName evidence="1">ATP synthase F(1) sector subunit delta</fullName>
    </alternativeName>
    <alternativeName>
        <fullName evidence="1">F-type ATPase subunit delta</fullName>
        <shortName evidence="1">F-ATPase subunit delta</shortName>
    </alternativeName>
</protein>
<feature type="chain" id="PRO_1000184761" description="ATP synthase subunit delta">
    <location>
        <begin position="1"/>
        <end position="184"/>
    </location>
</feature>
<keyword id="KW-0066">ATP synthesis</keyword>
<keyword id="KW-0139">CF(1)</keyword>
<keyword id="KW-0375">Hydrogen ion transport</keyword>
<keyword id="KW-0406">Ion transport</keyword>
<keyword id="KW-0472">Membrane</keyword>
<keyword id="KW-1185">Reference proteome</keyword>
<keyword id="KW-0793">Thylakoid</keyword>
<keyword id="KW-0813">Transport</keyword>
<dbReference type="EMBL" id="CP001037">
    <property type="protein sequence ID" value="ACC83209.1"/>
    <property type="molecule type" value="Genomic_DNA"/>
</dbReference>
<dbReference type="RefSeq" id="WP_012411165.1">
    <property type="nucleotide sequence ID" value="NC_010628.1"/>
</dbReference>
<dbReference type="SMR" id="B2J057"/>
<dbReference type="STRING" id="63737.Npun_F4862"/>
<dbReference type="EnsemblBacteria" id="ACC83209">
    <property type="protein sequence ID" value="ACC83209"/>
    <property type="gene ID" value="Npun_F4862"/>
</dbReference>
<dbReference type="KEGG" id="npu:Npun_F4862"/>
<dbReference type="eggNOG" id="COG0712">
    <property type="taxonomic scope" value="Bacteria"/>
</dbReference>
<dbReference type="HOGENOM" id="CLU_085114_4_0_3"/>
<dbReference type="OrthoDB" id="9802471at2"/>
<dbReference type="PhylomeDB" id="B2J057"/>
<dbReference type="Proteomes" id="UP000001191">
    <property type="component" value="Chromosome"/>
</dbReference>
<dbReference type="GO" id="GO:0031676">
    <property type="term" value="C:plasma membrane-derived thylakoid membrane"/>
    <property type="evidence" value="ECO:0007669"/>
    <property type="project" value="UniProtKB-SubCell"/>
</dbReference>
<dbReference type="GO" id="GO:0045259">
    <property type="term" value="C:proton-transporting ATP synthase complex"/>
    <property type="evidence" value="ECO:0007669"/>
    <property type="project" value="UniProtKB-KW"/>
</dbReference>
<dbReference type="GO" id="GO:0046933">
    <property type="term" value="F:proton-transporting ATP synthase activity, rotational mechanism"/>
    <property type="evidence" value="ECO:0007669"/>
    <property type="project" value="UniProtKB-UniRule"/>
</dbReference>
<dbReference type="Gene3D" id="1.10.520.20">
    <property type="entry name" value="N-terminal domain of the delta subunit of the F1F0-ATP synthase"/>
    <property type="match status" value="1"/>
</dbReference>
<dbReference type="HAMAP" id="MF_01416">
    <property type="entry name" value="ATP_synth_delta_bact"/>
    <property type="match status" value="1"/>
</dbReference>
<dbReference type="InterPro" id="IPR026015">
    <property type="entry name" value="ATP_synth_OSCP/delta_N_sf"/>
</dbReference>
<dbReference type="InterPro" id="IPR020781">
    <property type="entry name" value="ATPase_OSCP/d_CS"/>
</dbReference>
<dbReference type="InterPro" id="IPR000711">
    <property type="entry name" value="ATPase_OSCP/dsu"/>
</dbReference>
<dbReference type="NCBIfam" id="TIGR01145">
    <property type="entry name" value="ATP_synt_delta"/>
    <property type="match status" value="1"/>
</dbReference>
<dbReference type="NCBIfam" id="NF004402">
    <property type="entry name" value="PRK05758.2-2"/>
    <property type="match status" value="1"/>
</dbReference>
<dbReference type="PANTHER" id="PTHR11910">
    <property type="entry name" value="ATP SYNTHASE DELTA CHAIN"/>
    <property type="match status" value="1"/>
</dbReference>
<dbReference type="Pfam" id="PF00213">
    <property type="entry name" value="OSCP"/>
    <property type="match status" value="1"/>
</dbReference>
<dbReference type="PRINTS" id="PR00125">
    <property type="entry name" value="ATPASEDELTA"/>
</dbReference>
<dbReference type="SUPFAM" id="SSF47928">
    <property type="entry name" value="N-terminal domain of the delta subunit of the F1F0-ATP synthase"/>
    <property type="match status" value="1"/>
</dbReference>
<dbReference type="PROSITE" id="PS00389">
    <property type="entry name" value="ATPASE_DELTA"/>
    <property type="match status" value="1"/>
</dbReference>
<organism>
    <name type="scientific">Nostoc punctiforme (strain ATCC 29133 / PCC 73102)</name>
    <dbReference type="NCBI Taxonomy" id="63737"/>
    <lineage>
        <taxon>Bacteria</taxon>
        <taxon>Bacillati</taxon>
        <taxon>Cyanobacteriota</taxon>
        <taxon>Cyanophyceae</taxon>
        <taxon>Nostocales</taxon>
        <taxon>Nostocaceae</taxon>
        <taxon>Nostoc</taxon>
    </lineage>
</organism>
<gene>
    <name evidence="1" type="primary">atpH</name>
    <name evidence="1" type="synonym">atpD</name>
    <name type="ordered locus">Npun_F4862</name>
</gene>
<accession>B2J057</accession>
<sequence>MTSQVAAAEVAQPYAQALLSIAQSKNLTEEFGEDARTFLGLLRADKQLHNFFSNPFIQAENKKALIKQILGEGSNPYLRNFLLILVDKRRIAFLESIFQQYLALLRQLNQTVLAEVISAVPLTEAQQQAIIQKVIAISNARQVELETKVDSELIGGVIIKVGSQVIDASIRGQLRRLSLRLTNS</sequence>
<evidence type="ECO:0000255" key="1">
    <source>
        <dbReference type="HAMAP-Rule" id="MF_01416"/>
    </source>
</evidence>
<proteinExistence type="inferred from homology"/>